<protein>
    <recommendedName>
        <fullName evidence="1">Putative pseudouridine methyltransferase</fullName>
        <ecNumber evidence="1">2.1.1.-</ecNumber>
    </recommendedName>
</protein>
<name>TRMYL_SHEB2</name>
<comment type="subcellular location">
    <subcellularLocation>
        <location evidence="1">Cytoplasm</location>
    </subcellularLocation>
</comment>
<comment type="similarity">
    <text evidence="1">Belongs to the methyltransferase superfamily. TrmY family.</text>
</comment>
<feature type="chain" id="PRO_1000197957" description="Putative pseudouridine methyltransferase">
    <location>
        <begin position="1"/>
        <end position="198"/>
    </location>
</feature>
<feature type="binding site" evidence="1">
    <location>
        <position position="132"/>
    </location>
    <ligand>
        <name>S-adenosyl-L-methionine</name>
        <dbReference type="ChEBI" id="CHEBI:59789"/>
    </ligand>
</feature>
<feature type="binding site" evidence="1">
    <location>
        <position position="186"/>
    </location>
    <ligand>
        <name>S-adenosyl-L-methionine</name>
        <dbReference type="ChEBI" id="CHEBI:59789"/>
    </ligand>
</feature>
<accession>B8E744</accession>
<reference key="1">
    <citation type="submission" date="2008-12" db="EMBL/GenBank/DDBJ databases">
        <title>Complete sequence of chromosome of Shewanella baltica OS223.</title>
        <authorList>
            <consortium name="US DOE Joint Genome Institute"/>
            <person name="Lucas S."/>
            <person name="Copeland A."/>
            <person name="Lapidus A."/>
            <person name="Glavina del Rio T."/>
            <person name="Dalin E."/>
            <person name="Tice H."/>
            <person name="Bruce D."/>
            <person name="Goodwin L."/>
            <person name="Pitluck S."/>
            <person name="Chertkov O."/>
            <person name="Meincke L."/>
            <person name="Brettin T."/>
            <person name="Detter J.C."/>
            <person name="Han C."/>
            <person name="Kuske C.R."/>
            <person name="Larimer F."/>
            <person name="Land M."/>
            <person name="Hauser L."/>
            <person name="Kyrpides N."/>
            <person name="Ovchinnikova G."/>
            <person name="Brettar I."/>
            <person name="Rodrigues J."/>
            <person name="Konstantinidis K."/>
            <person name="Tiedje J."/>
        </authorList>
    </citation>
    <scope>NUCLEOTIDE SEQUENCE [LARGE SCALE GENOMIC DNA]</scope>
    <source>
        <strain>OS223</strain>
    </source>
</reference>
<organism>
    <name type="scientific">Shewanella baltica (strain OS223)</name>
    <dbReference type="NCBI Taxonomy" id="407976"/>
    <lineage>
        <taxon>Bacteria</taxon>
        <taxon>Pseudomonadati</taxon>
        <taxon>Pseudomonadota</taxon>
        <taxon>Gammaproteobacteria</taxon>
        <taxon>Alteromonadales</taxon>
        <taxon>Shewanellaceae</taxon>
        <taxon>Shewanella</taxon>
    </lineage>
</organism>
<dbReference type="EC" id="2.1.1.-" evidence="1"/>
<dbReference type="EMBL" id="CP001252">
    <property type="protein sequence ID" value="ACK46317.1"/>
    <property type="molecule type" value="Genomic_DNA"/>
</dbReference>
<dbReference type="SMR" id="B8E744"/>
<dbReference type="KEGG" id="sbp:Sbal223_1812"/>
<dbReference type="HOGENOM" id="CLU_107018_0_0_6"/>
<dbReference type="Proteomes" id="UP000002507">
    <property type="component" value="Chromosome"/>
</dbReference>
<dbReference type="GO" id="GO:0005737">
    <property type="term" value="C:cytoplasm"/>
    <property type="evidence" value="ECO:0007669"/>
    <property type="project" value="UniProtKB-SubCell"/>
</dbReference>
<dbReference type="GO" id="GO:0008757">
    <property type="term" value="F:S-adenosylmethionine-dependent methyltransferase activity"/>
    <property type="evidence" value="ECO:0007669"/>
    <property type="project" value="UniProtKB-UniRule"/>
</dbReference>
<dbReference type="GO" id="GO:0008175">
    <property type="term" value="F:tRNA methyltransferase activity"/>
    <property type="evidence" value="ECO:0007669"/>
    <property type="project" value="InterPro"/>
</dbReference>
<dbReference type="GO" id="GO:0030488">
    <property type="term" value="P:tRNA methylation"/>
    <property type="evidence" value="ECO:0007669"/>
    <property type="project" value="TreeGrafter"/>
</dbReference>
<dbReference type="CDD" id="cd18087">
    <property type="entry name" value="TrmY-like"/>
    <property type="match status" value="1"/>
</dbReference>
<dbReference type="Gene3D" id="3.40.1280.10">
    <property type="match status" value="1"/>
</dbReference>
<dbReference type="HAMAP" id="MF_00587">
    <property type="entry name" value="tRNA_methyltr_TrmY"/>
    <property type="match status" value="1"/>
</dbReference>
<dbReference type="InterPro" id="IPR029028">
    <property type="entry name" value="Alpha/beta_knot_MTases"/>
</dbReference>
<dbReference type="InterPro" id="IPR007158">
    <property type="entry name" value="TrmY"/>
</dbReference>
<dbReference type="InterPro" id="IPR029026">
    <property type="entry name" value="tRNA_m1G_MTases_N"/>
</dbReference>
<dbReference type="NCBIfam" id="NF002560">
    <property type="entry name" value="PRK02135.1"/>
    <property type="match status" value="1"/>
</dbReference>
<dbReference type="PANTHER" id="PTHR40703">
    <property type="entry name" value="TRNA (PSEUDOURIDINE(54)-N(1))-METHYLTRANSFERASE"/>
    <property type="match status" value="1"/>
</dbReference>
<dbReference type="PANTHER" id="PTHR40703:SF1">
    <property type="entry name" value="TRNA (PSEUDOURIDINE(54)-N(1))-METHYLTRANSFERASE"/>
    <property type="match status" value="1"/>
</dbReference>
<dbReference type="Pfam" id="PF04013">
    <property type="entry name" value="Methyltrn_RNA_2"/>
    <property type="match status" value="1"/>
</dbReference>
<dbReference type="SUPFAM" id="SSF75217">
    <property type="entry name" value="alpha/beta knot"/>
    <property type="match status" value="1"/>
</dbReference>
<evidence type="ECO:0000255" key="1">
    <source>
        <dbReference type="HAMAP-Rule" id="MF_00587"/>
    </source>
</evidence>
<proteinExistence type="inferred from homology"/>
<gene>
    <name type="ordered locus">Sbal223_1812</name>
</gene>
<keyword id="KW-0963">Cytoplasm</keyword>
<keyword id="KW-0489">Methyltransferase</keyword>
<keyword id="KW-0949">S-adenosyl-L-methionine</keyword>
<keyword id="KW-0808">Transferase</keyword>
<sequence>MRAFVLRARSAPTDSQLFLASVGQEAHTEILAHTLMNTIFVAQSHRNDVVVYLVLESTHDFSRTICFDTRNICHIGGFHEQALLTKIAKALDISRGMTKEQTRVVDEGITVSTISFEKLVQDLAVDYQLFMMDKKGTSIREQEFVGNPCFLLTDHIPMPKKSFNTLKRLGAQKISLGPKMLFASQCVVLIHNELDINQ</sequence>